<comment type="function">
    <text evidence="1">NDH-1 shuttles electrons from NADH, via FMN and iron-sulfur (Fe-S) centers, to quinones in the respiratory chain. The immediate electron acceptor for the enzyme in this species is believed to be a menaquinone. Couples the redox reaction to proton translocation (for every two electrons transferred, four hydrogen ions are translocated across the cytoplasmic membrane), and thus conserves the redox energy in a proton gradient.</text>
</comment>
<comment type="catalytic activity">
    <reaction evidence="1">
        <text>a quinone + NADH + 5 H(+)(in) = a quinol + NAD(+) + 4 H(+)(out)</text>
        <dbReference type="Rhea" id="RHEA:57888"/>
        <dbReference type="ChEBI" id="CHEBI:15378"/>
        <dbReference type="ChEBI" id="CHEBI:24646"/>
        <dbReference type="ChEBI" id="CHEBI:57540"/>
        <dbReference type="ChEBI" id="CHEBI:57945"/>
        <dbReference type="ChEBI" id="CHEBI:132124"/>
    </reaction>
</comment>
<comment type="subunit">
    <text evidence="1">NDH-1 is composed of 14 different subunits. Subunits NuoA, H, J, K, L, M, N constitute the membrane sector of the complex.</text>
</comment>
<comment type="subcellular location">
    <subcellularLocation>
        <location evidence="1">Cell membrane</location>
        <topology evidence="1">Multi-pass membrane protein</topology>
    </subcellularLocation>
</comment>
<comment type="similarity">
    <text evidence="1">Belongs to the complex I subunit 2 family.</text>
</comment>
<name>NUON_RUBXD</name>
<organism>
    <name type="scientific">Rubrobacter xylanophilus (strain DSM 9941 / JCM 11954 / NBRC 16129 / PRD-1)</name>
    <dbReference type="NCBI Taxonomy" id="266117"/>
    <lineage>
        <taxon>Bacteria</taxon>
        <taxon>Bacillati</taxon>
        <taxon>Actinomycetota</taxon>
        <taxon>Rubrobacteria</taxon>
        <taxon>Rubrobacterales</taxon>
        <taxon>Rubrobacteraceae</taxon>
        <taxon>Rubrobacter</taxon>
    </lineage>
</organism>
<protein>
    <recommendedName>
        <fullName evidence="1">NADH-quinone oxidoreductase subunit N</fullName>
        <ecNumber evidence="1">7.1.1.-</ecNumber>
    </recommendedName>
    <alternativeName>
        <fullName evidence="1">NADH dehydrogenase I subunit N</fullName>
    </alternativeName>
    <alternativeName>
        <fullName evidence="1">NDH-1 subunit N</fullName>
    </alternativeName>
</protein>
<sequence length="480" mass="49276">MPVSGEAFLGLLPELVATGFLLVVLLGGVFAGPRSEALVAALAGLGTLASFAAAAGLLAAGFSGTFFGGGYAVDPFALYFKLIITATAFFTVIAAARWAERTGDAPEYMTLIIAVALGGMLLVSMRDLFGVFLAVELATIPSYAMVAFDRRRRESAEGGMKYLITGVIASSFLLYGIVLIYGVSGSANLSRVAEAFGEGLSPVAIVGLVLMISGLAFKVSAAPFHFWTPDAYQGAPTSAAAFLSVAPKAAIFAALLRILLDGMPQAAPTWTALMAVIAIVTMFVGNLLALRQSNVRRMLAYSSVAHSGYILAAFAALQGDAVSSGVQAVMIYSAAYAVMNLGAFLTIDLVGEEAKSFNGLFATRPMLAAAMAVFMAALVGIPPLSGFFGKAWVIYAGAGSGSALVYVAVAALVVNSVLSVPYYFGIIRNMFQEEPVSAGGPAKKGDGGVAFTVYAMALLTALFFLGVGPLAALAAGSGLL</sequence>
<reference key="1">
    <citation type="submission" date="2006-06" db="EMBL/GenBank/DDBJ databases">
        <title>Complete sequence of Rubrobacter xylanophilus DSM 9941.</title>
        <authorList>
            <consortium name="US DOE Joint Genome Institute"/>
            <person name="Copeland A."/>
            <person name="Lucas S."/>
            <person name="Lapidus A."/>
            <person name="Barry K."/>
            <person name="Detter J.C."/>
            <person name="Glavina del Rio T."/>
            <person name="Hammon N."/>
            <person name="Israni S."/>
            <person name="Dalin E."/>
            <person name="Tice H."/>
            <person name="Pitluck S."/>
            <person name="Munk A.C."/>
            <person name="Brettin T."/>
            <person name="Bruce D."/>
            <person name="Han C."/>
            <person name="Tapia R."/>
            <person name="Gilna P."/>
            <person name="Schmutz J."/>
            <person name="Larimer F."/>
            <person name="Land M."/>
            <person name="Hauser L."/>
            <person name="Kyrpides N."/>
            <person name="Lykidis A."/>
            <person name="da Costa M.S."/>
            <person name="Rainey F.A."/>
            <person name="Empadinhas N."/>
            <person name="Jolivet E."/>
            <person name="Battista J.R."/>
            <person name="Richardson P."/>
        </authorList>
    </citation>
    <scope>NUCLEOTIDE SEQUENCE [LARGE SCALE GENOMIC DNA]</scope>
    <source>
        <strain>DSM 9941 / JCM 11954 / NBRC 16129 / PRD-1</strain>
    </source>
</reference>
<dbReference type="EC" id="7.1.1.-" evidence="1"/>
<dbReference type="EMBL" id="CP000386">
    <property type="protein sequence ID" value="ABG04586.1"/>
    <property type="molecule type" value="Genomic_DNA"/>
</dbReference>
<dbReference type="RefSeq" id="WP_011564603.1">
    <property type="nucleotide sequence ID" value="NC_008148.1"/>
</dbReference>
<dbReference type="SMR" id="Q1AVJ2"/>
<dbReference type="STRING" id="266117.Rxyl_1625"/>
<dbReference type="KEGG" id="rxy:Rxyl_1625"/>
<dbReference type="eggNOG" id="COG1007">
    <property type="taxonomic scope" value="Bacteria"/>
</dbReference>
<dbReference type="HOGENOM" id="CLU_007100_1_5_11"/>
<dbReference type="PhylomeDB" id="Q1AVJ2"/>
<dbReference type="Proteomes" id="UP000006637">
    <property type="component" value="Chromosome"/>
</dbReference>
<dbReference type="GO" id="GO:0005886">
    <property type="term" value="C:plasma membrane"/>
    <property type="evidence" value="ECO:0007669"/>
    <property type="project" value="UniProtKB-SubCell"/>
</dbReference>
<dbReference type="GO" id="GO:0008137">
    <property type="term" value="F:NADH dehydrogenase (ubiquinone) activity"/>
    <property type="evidence" value="ECO:0007669"/>
    <property type="project" value="InterPro"/>
</dbReference>
<dbReference type="GO" id="GO:0050136">
    <property type="term" value="F:NADH:ubiquinone reductase (non-electrogenic) activity"/>
    <property type="evidence" value="ECO:0007669"/>
    <property type="project" value="UniProtKB-UniRule"/>
</dbReference>
<dbReference type="GO" id="GO:0048038">
    <property type="term" value="F:quinone binding"/>
    <property type="evidence" value="ECO:0007669"/>
    <property type="project" value="UniProtKB-KW"/>
</dbReference>
<dbReference type="GO" id="GO:0042773">
    <property type="term" value="P:ATP synthesis coupled electron transport"/>
    <property type="evidence" value="ECO:0007669"/>
    <property type="project" value="InterPro"/>
</dbReference>
<dbReference type="HAMAP" id="MF_00445">
    <property type="entry name" value="NDH1_NuoN_1"/>
    <property type="match status" value="1"/>
</dbReference>
<dbReference type="InterPro" id="IPR010096">
    <property type="entry name" value="NADH-Q_OxRdtase_suN/2"/>
</dbReference>
<dbReference type="InterPro" id="IPR001750">
    <property type="entry name" value="ND/Mrp_TM"/>
</dbReference>
<dbReference type="NCBIfam" id="TIGR01770">
    <property type="entry name" value="NDH_I_N"/>
    <property type="match status" value="1"/>
</dbReference>
<dbReference type="PANTHER" id="PTHR22773">
    <property type="entry name" value="NADH DEHYDROGENASE"/>
    <property type="match status" value="1"/>
</dbReference>
<dbReference type="Pfam" id="PF00361">
    <property type="entry name" value="Proton_antipo_M"/>
    <property type="match status" value="1"/>
</dbReference>
<gene>
    <name evidence="1" type="primary">nuoN</name>
    <name type="ordered locus">Rxyl_1625</name>
</gene>
<proteinExistence type="inferred from homology"/>
<keyword id="KW-1003">Cell membrane</keyword>
<keyword id="KW-0472">Membrane</keyword>
<keyword id="KW-0520">NAD</keyword>
<keyword id="KW-0874">Quinone</keyword>
<keyword id="KW-1185">Reference proteome</keyword>
<keyword id="KW-1278">Translocase</keyword>
<keyword id="KW-0812">Transmembrane</keyword>
<keyword id="KW-1133">Transmembrane helix</keyword>
<keyword id="KW-0813">Transport</keyword>
<evidence type="ECO:0000255" key="1">
    <source>
        <dbReference type="HAMAP-Rule" id="MF_00445"/>
    </source>
</evidence>
<accession>Q1AVJ2</accession>
<feature type="chain" id="PRO_0000391217" description="NADH-quinone oxidoreductase subunit N">
    <location>
        <begin position="1"/>
        <end position="480"/>
    </location>
</feature>
<feature type="transmembrane region" description="Helical" evidence="1">
    <location>
        <begin position="11"/>
        <end position="31"/>
    </location>
</feature>
<feature type="transmembrane region" description="Helical" evidence="1">
    <location>
        <begin position="38"/>
        <end position="58"/>
    </location>
</feature>
<feature type="transmembrane region" description="Helical" evidence="1">
    <location>
        <begin position="76"/>
        <end position="96"/>
    </location>
</feature>
<feature type="transmembrane region" description="Helical" evidence="1">
    <location>
        <begin position="105"/>
        <end position="125"/>
    </location>
</feature>
<feature type="transmembrane region" description="Helical" evidence="1">
    <location>
        <begin position="128"/>
        <end position="148"/>
    </location>
</feature>
<feature type="transmembrane region" description="Helical" evidence="1">
    <location>
        <begin position="163"/>
        <end position="183"/>
    </location>
</feature>
<feature type="transmembrane region" description="Helical" evidence="1">
    <location>
        <begin position="195"/>
        <end position="215"/>
    </location>
</feature>
<feature type="transmembrane region" description="Helical" evidence="1">
    <location>
        <begin position="240"/>
        <end position="260"/>
    </location>
</feature>
<feature type="transmembrane region" description="Helical" evidence="1">
    <location>
        <begin position="270"/>
        <end position="290"/>
    </location>
</feature>
<feature type="transmembrane region" description="Helical" evidence="1">
    <location>
        <begin position="298"/>
        <end position="318"/>
    </location>
</feature>
<feature type="transmembrane region" description="Helical" evidence="1">
    <location>
        <begin position="329"/>
        <end position="349"/>
    </location>
</feature>
<feature type="transmembrane region" description="Helical" evidence="1">
    <location>
        <begin position="368"/>
        <end position="388"/>
    </location>
</feature>
<feature type="transmembrane region" description="Helical" evidence="1">
    <location>
        <begin position="407"/>
        <end position="427"/>
    </location>
</feature>
<feature type="transmembrane region" description="Helical" evidence="1">
    <location>
        <begin position="453"/>
        <end position="473"/>
    </location>
</feature>